<keyword id="KW-0046">Antibiotic resistance</keyword>
<keyword id="KW-0997">Cell inner membrane</keyword>
<keyword id="KW-1003">Cell membrane</keyword>
<keyword id="KW-0133">Cell shape</keyword>
<keyword id="KW-0961">Cell wall biogenesis/degradation</keyword>
<keyword id="KW-0378">Hydrolase</keyword>
<keyword id="KW-0472">Membrane</keyword>
<keyword id="KW-0573">Peptidoglycan synthesis</keyword>
<keyword id="KW-1185">Reference proteome</keyword>
<keyword id="KW-0812">Transmembrane</keyword>
<keyword id="KW-1133">Transmembrane helix</keyword>
<feature type="chain" id="PRO_0000151080" description="Undecaprenyl-diphosphatase 2">
    <location>
        <begin position="1"/>
        <end position="278"/>
    </location>
</feature>
<feature type="transmembrane region" description="Helical" evidence="1">
    <location>
        <begin position="43"/>
        <end position="63"/>
    </location>
</feature>
<feature type="transmembrane region" description="Helical" evidence="1">
    <location>
        <begin position="88"/>
        <end position="108"/>
    </location>
</feature>
<feature type="transmembrane region" description="Helical" evidence="1">
    <location>
        <begin position="119"/>
        <end position="139"/>
    </location>
</feature>
<feature type="transmembrane region" description="Helical" evidence="1">
    <location>
        <begin position="149"/>
        <end position="169"/>
    </location>
</feature>
<feature type="transmembrane region" description="Helical" evidence="1">
    <location>
        <begin position="194"/>
        <end position="214"/>
    </location>
</feature>
<feature type="transmembrane region" description="Helical" evidence="1">
    <location>
        <begin position="226"/>
        <end position="246"/>
    </location>
</feature>
<feature type="transmembrane region" description="Helical" evidence="1">
    <location>
        <begin position="254"/>
        <end position="274"/>
    </location>
</feature>
<reference key="1">
    <citation type="journal article" date="2001" name="Science">
        <title>The genome of the natural genetic engineer Agrobacterium tumefaciens C58.</title>
        <authorList>
            <person name="Wood D.W."/>
            <person name="Setubal J.C."/>
            <person name="Kaul R."/>
            <person name="Monks D.E."/>
            <person name="Kitajima J.P."/>
            <person name="Okura V.K."/>
            <person name="Zhou Y."/>
            <person name="Chen L."/>
            <person name="Wood G.E."/>
            <person name="Almeida N.F. Jr."/>
            <person name="Woo L."/>
            <person name="Chen Y."/>
            <person name="Paulsen I.T."/>
            <person name="Eisen J.A."/>
            <person name="Karp P.D."/>
            <person name="Bovee D. Sr."/>
            <person name="Chapman P."/>
            <person name="Clendenning J."/>
            <person name="Deatherage G."/>
            <person name="Gillet W."/>
            <person name="Grant C."/>
            <person name="Kutyavin T."/>
            <person name="Levy R."/>
            <person name="Li M.-J."/>
            <person name="McClelland E."/>
            <person name="Palmieri A."/>
            <person name="Raymond C."/>
            <person name="Rouse G."/>
            <person name="Saenphimmachak C."/>
            <person name="Wu Z."/>
            <person name="Romero P."/>
            <person name="Gordon D."/>
            <person name="Zhang S."/>
            <person name="Yoo H."/>
            <person name="Tao Y."/>
            <person name="Biddle P."/>
            <person name="Jung M."/>
            <person name="Krespan W."/>
            <person name="Perry M."/>
            <person name="Gordon-Kamm B."/>
            <person name="Liao L."/>
            <person name="Kim S."/>
            <person name="Hendrick C."/>
            <person name="Zhao Z.-Y."/>
            <person name="Dolan M."/>
            <person name="Chumley F."/>
            <person name="Tingey S.V."/>
            <person name="Tomb J.-F."/>
            <person name="Gordon M.P."/>
            <person name="Olson M.V."/>
            <person name="Nester E.W."/>
        </authorList>
    </citation>
    <scope>NUCLEOTIDE SEQUENCE [LARGE SCALE GENOMIC DNA]</scope>
    <source>
        <strain>C58 / ATCC 33970</strain>
    </source>
</reference>
<reference key="2">
    <citation type="journal article" date="2001" name="Science">
        <title>Genome sequence of the plant pathogen and biotechnology agent Agrobacterium tumefaciens C58.</title>
        <authorList>
            <person name="Goodner B."/>
            <person name="Hinkle G."/>
            <person name="Gattung S."/>
            <person name="Miller N."/>
            <person name="Blanchard M."/>
            <person name="Qurollo B."/>
            <person name="Goldman B.S."/>
            <person name="Cao Y."/>
            <person name="Askenazi M."/>
            <person name="Halling C."/>
            <person name="Mullin L."/>
            <person name="Houmiel K."/>
            <person name="Gordon J."/>
            <person name="Vaudin M."/>
            <person name="Iartchouk O."/>
            <person name="Epp A."/>
            <person name="Liu F."/>
            <person name="Wollam C."/>
            <person name="Allinger M."/>
            <person name="Doughty D."/>
            <person name="Scott C."/>
            <person name="Lappas C."/>
            <person name="Markelz B."/>
            <person name="Flanagan C."/>
            <person name="Crowell C."/>
            <person name="Gurson J."/>
            <person name="Lomo C."/>
            <person name="Sear C."/>
            <person name="Strub G."/>
            <person name="Cielo C."/>
            <person name="Slater S."/>
        </authorList>
    </citation>
    <scope>NUCLEOTIDE SEQUENCE [LARGE SCALE GENOMIC DNA]</scope>
    <source>
        <strain>C58 / ATCC 33970</strain>
    </source>
</reference>
<comment type="function">
    <text evidence="1">Catalyzes the dephosphorylation of undecaprenyl diphosphate (UPP). Confers resistance to bacitracin.</text>
</comment>
<comment type="catalytic activity">
    <reaction evidence="1">
        <text>di-trans,octa-cis-undecaprenyl diphosphate + H2O = di-trans,octa-cis-undecaprenyl phosphate + phosphate + H(+)</text>
        <dbReference type="Rhea" id="RHEA:28094"/>
        <dbReference type="ChEBI" id="CHEBI:15377"/>
        <dbReference type="ChEBI" id="CHEBI:15378"/>
        <dbReference type="ChEBI" id="CHEBI:43474"/>
        <dbReference type="ChEBI" id="CHEBI:58405"/>
        <dbReference type="ChEBI" id="CHEBI:60392"/>
        <dbReference type="EC" id="3.6.1.27"/>
    </reaction>
</comment>
<comment type="subcellular location">
    <subcellularLocation>
        <location evidence="1">Cell inner membrane</location>
        <topology evidence="1">Multi-pass membrane protein</topology>
    </subcellularLocation>
</comment>
<comment type="miscellaneous">
    <text>Bacitracin is thought to be involved in the inhibition of peptidoglycan synthesis by sequestering undecaprenyl diphosphate, thereby reducing the pool of lipid carrier available.</text>
</comment>
<comment type="similarity">
    <text evidence="1">Belongs to the UppP family.</text>
</comment>
<accession>P58741</accession>
<proteinExistence type="inferred from homology"/>
<protein>
    <recommendedName>
        <fullName evidence="1">Undecaprenyl-diphosphatase 2</fullName>
        <ecNumber evidence="1">3.6.1.27</ecNumber>
    </recommendedName>
    <alternativeName>
        <fullName evidence="1">Bacitracin resistance protein 2</fullName>
    </alternativeName>
    <alternativeName>
        <fullName evidence="1">Undecaprenyl pyrophosphate phosphatase 2</fullName>
    </alternativeName>
</protein>
<evidence type="ECO:0000255" key="1">
    <source>
        <dbReference type="HAMAP-Rule" id="MF_01006"/>
    </source>
</evidence>
<gene>
    <name evidence="1" type="primary">uppP2</name>
    <name type="synonym">bacA2</name>
    <name type="synonym">upk2</name>
    <name type="ordered locus">Atu0998</name>
    <name type="ORF">AGR_C_1833</name>
</gene>
<sequence length="278" mass="30075">MSMGWMEAGFLGLLQGLTEFLPVSSSAHLRIAGEFLPSGADPGAAFTAITQIGTEMAVLVYFWSDIMRIAAAWLRQNLRLGEYNKADARLGWLIIVGSVPIVFLGLFFKDAIEHSLRNLYITAVMLIVFGIVLGLADRIGEKRYKLNQLIWRDGILFGFAQAMALIPGVSRSGGTISAGLLLGYTREAAARYSFLLAVPAVFGSGFYQLFKSIGEDNPVGWGQTGLATLIAFIVGYAVIVVFLKLVSTKSYMPFVWYRVVIGFILLALLGTGVISAGG</sequence>
<dbReference type="EC" id="3.6.1.27" evidence="1"/>
<dbReference type="EMBL" id="AE007869">
    <property type="protein sequence ID" value="AAK86807.1"/>
    <property type="molecule type" value="Genomic_DNA"/>
</dbReference>
<dbReference type="PIR" id="AF2699">
    <property type="entry name" value="AF2699"/>
</dbReference>
<dbReference type="PIR" id="F97481">
    <property type="entry name" value="F97481"/>
</dbReference>
<dbReference type="RefSeq" id="NP_354022.1">
    <property type="nucleotide sequence ID" value="NC_003062.2"/>
</dbReference>
<dbReference type="RefSeq" id="WP_010971321.1">
    <property type="nucleotide sequence ID" value="NC_003062.2"/>
</dbReference>
<dbReference type="SMR" id="P58741"/>
<dbReference type="STRING" id="176299.Atu0998"/>
<dbReference type="EnsemblBacteria" id="AAK86807">
    <property type="protein sequence ID" value="AAK86807"/>
    <property type="gene ID" value="Atu0998"/>
</dbReference>
<dbReference type="GeneID" id="1133036"/>
<dbReference type="KEGG" id="atu:Atu0998"/>
<dbReference type="PATRIC" id="fig|176299.10.peg.1012"/>
<dbReference type="eggNOG" id="COG1968">
    <property type="taxonomic scope" value="Bacteria"/>
</dbReference>
<dbReference type="HOGENOM" id="CLU_060296_1_0_5"/>
<dbReference type="OrthoDB" id="9808289at2"/>
<dbReference type="PhylomeDB" id="P58741"/>
<dbReference type="BioCyc" id="AGRO:ATU0998-MONOMER"/>
<dbReference type="Proteomes" id="UP000000813">
    <property type="component" value="Chromosome circular"/>
</dbReference>
<dbReference type="GO" id="GO:0005886">
    <property type="term" value="C:plasma membrane"/>
    <property type="evidence" value="ECO:0007669"/>
    <property type="project" value="UniProtKB-SubCell"/>
</dbReference>
<dbReference type="GO" id="GO:0050380">
    <property type="term" value="F:undecaprenyl-diphosphatase activity"/>
    <property type="evidence" value="ECO:0007669"/>
    <property type="project" value="UniProtKB-UniRule"/>
</dbReference>
<dbReference type="GO" id="GO:0071555">
    <property type="term" value="P:cell wall organization"/>
    <property type="evidence" value="ECO:0007669"/>
    <property type="project" value="UniProtKB-KW"/>
</dbReference>
<dbReference type="GO" id="GO:0009252">
    <property type="term" value="P:peptidoglycan biosynthetic process"/>
    <property type="evidence" value="ECO:0007669"/>
    <property type="project" value="UniProtKB-KW"/>
</dbReference>
<dbReference type="GO" id="GO:0008360">
    <property type="term" value="P:regulation of cell shape"/>
    <property type="evidence" value="ECO:0007669"/>
    <property type="project" value="UniProtKB-KW"/>
</dbReference>
<dbReference type="GO" id="GO:0046677">
    <property type="term" value="P:response to antibiotic"/>
    <property type="evidence" value="ECO:0007669"/>
    <property type="project" value="UniProtKB-UniRule"/>
</dbReference>
<dbReference type="HAMAP" id="MF_01006">
    <property type="entry name" value="Undec_diphosphatase"/>
    <property type="match status" value="1"/>
</dbReference>
<dbReference type="InterPro" id="IPR003824">
    <property type="entry name" value="UppP"/>
</dbReference>
<dbReference type="NCBIfam" id="NF001392">
    <property type="entry name" value="PRK00281.2-1"/>
    <property type="match status" value="1"/>
</dbReference>
<dbReference type="NCBIfam" id="TIGR00753">
    <property type="entry name" value="undec_PP_bacA"/>
    <property type="match status" value="1"/>
</dbReference>
<dbReference type="PANTHER" id="PTHR30622">
    <property type="entry name" value="UNDECAPRENYL-DIPHOSPHATASE"/>
    <property type="match status" value="1"/>
</dbReference>
<dbReference type="PANTHER" id="PTHR30622:SF4">
    <property type="entry name" value="UNDECAPRENYL-DIPHOSPHATASE"/>
    <property type="match status" value="1"/>
</dbReference>
<dbReference type="Pfam" id="PF02673">
    <property type="entry name" value="BacA"/>
    <property type="match status" value="1"/>
</dbReference>
<name>UPPP2_AGRFC</name>
<organism>
    <name type="scientific">Agrobacterium fabrum (strain C58 / ATCC 33970)</name>
    <name type="common">Agrobacterium tumefaciens (strain C58)</name>
    <dbReference type="NCBI Taxonomy" id="176299"/>
    <lineage>
        <taxon>Bacteria</taxon>
        <taxon>Pseudomonadati</taxon>
        <taxon>Pseudomonadota</taxon>
        <taxon>Alphaproteobacteria</taxon>
        <taxon>Hyphomicrobiales</taxon>
        <taxon>Rhizobiaceae</taxon>
        <taxon>Rhizobium/Agrobacterium group</taxon>
        <taxon>Agrobacterium</taxon>
        <taxon>Agrobacterium tumefaciens complex</taxon>
    </lineage>
</organism>